<keyword id="KW-0158">Chromosome</keyword>
<keyword id="KW-0217">Developmental protein</keyword>
<keyword id="KW-0221">Differentiation</keyword>
<keyword id="KW-0226">DNA condensation</keyword>
<keyword id="KW-0238">DNA-binding</keyword>
<keyword id="KW-0544">Nucleosome core</keyword>
<keyword id="KW-0539">Nucleus</keyword>
<keyword id="KW-0744">Spermatogenesis</keyword>
<reference key="1">
    <citation type="journal article" date="1997" name="J. Mammal. Evol.">
        <title>Reconstructing the taxonomic radiation of dasyurine marsupials with cytochrome b, 12S rRNA, and protamine P1 gene trees.</title>
        <authorList>
            <person name="Krajewski C."/>
            <person name="Young J."/>
            <person name="Buckley L."/>
            <person name="Woolley P.A."/>
            <person name="Westerman M."/>
        </authorList>
    </citation>
    <scope>NUCLEOTIDE SEQUENCE [GENOMIC DNA]</scope>
</reference>
<gene>
    <name type="primary">PRM1</name>
</gene>
<evidence type="ECO:0000250" key="1"/>
<evidence type="ECO:0000256" key="2">
    <source>
        <dbReference type="SAM" id="MobiDB-lite"/>
    </source>
</evidence>
<evidence type="ECO:0000305" key="3"/>
<sequence>MARYRRHSRSRSRSRYRRRRRRRSRHRNRRRTYRRSRRHSRRRRGRRRGYSRRRYSRRGRRRY</sequence>
<name>HSP1_PSEWO</name>
<protein>
    <recommendedName>
        <fullName>Sperm protamine P1</fullName>
    </recommendedName>
</protein>
<organism>
    <name type="scientific">Pseudantechinus woolleyae</name>
    <name type="common">Woolley's false antechinus</name>
    <dbReference type="NCBI Taxonomy" id="32559"/>
    <lineage>
        <taxon>Eukaryota</taxon>
        <taxon>Metazoa</taxon>
        <taxon>Chordata</taxon>
        <taxon>Craniata</taxon>
        <taxon>Vertebrata</taxon>
        <taxon>Euteleostomi</taxon>
        <taxon>Mammalia</taxon>
        <taxon>Metatheria</taxon>
        <taxon>Dasyuromorphia</taxon>
        <taxon>Dasyuridae</taxon>
        <taxon>Pseudantechinus</taxon>
    </lineage>
</organism>
<proteinExistence type="evidence at transcript level"/>
<comment type="function">
    <text evidence="1">Protamines substitute for histones in the chromatin of sperm during the haploid phase of spermatogenesis. They compact sperm DNA into a highly condensed, stable and inactive complex (By similarity).</text>
</comment>
<comment type="subcellular location">
    <subcellularLocation>
        <location evidence="1">Nucleus</location>
    </subcellularLocation>
    <subcellularLocation>
        <location evidence="1">Chromosome</location>
    </subcellularLocation>
</comment>
<comment type="tissue specificity">
    <text>Testis.</text>
</comment>
<comment type="similarity">
    <text evidence="3">Belongs to the protamine P1 family.</text>
</comment>
<feature type="chain" id="PRO_0000191545" description="Sperm protamine P1">
    <location>
        <begin position="1"/>
        <end position="63"/>
    </location>
</feature>
<feature type="region of interest" description="Disordered" evidence="2">
    <location>
        <begin position="1"/>
        <end position="63"/>
    </location>
</feature>
<dbReference type="EMBL" id="AF010279">
    <property type="protein sequence ID" value="AAB69309.1"/>
    <property type="molecule type" value="Genomic_DNA"/>
</dbReference>
<dbReference type="GO" id="GO:0000786">
    <property type="term" value="C:nucleosome"/>
    <property type="evidence" value="ECO:0007669"/>
    <property type="project" value="UniProtKB-KW"/>
</dbReference>
<dbReference type="GO" id="GO:0005634">
    <property type="term" value="C:nucleus"/>
    <property type="evidence" value="ECO:0007669"/>
    <property type="project" value="UniProtKB-SubCell"/>
</dbReference>
<dbReference type="GO" id="GO:0003677">
    <property type="term" value="F:DNA binding"/>
    <property type="evidence" value="ECO:0007669"/>
    <property type="project" value="UniProtKB-KW"/>
</dbReference>
<dbReference type="GO" id="GO:0030261">
    <property type="term" value="P:chromosome condensation"/>
    <property type="evidence" value="ECO:0007669"/>
    <property type="project" value="UniProtKB-KW"/>
</dbReference>
<dbReference type="GO" id="GO:0035092">
    <property type="term" value="P:sperm DNA condensation"/>
    <property type="evidence" value="ECO:0007669"/>
    <property type="project" value="InterPro"/>
</dbReference>
<dbReference type="InterPro" id="IPR000221">
    <property type="entry name" value="Protamine_P1"/>
</dbReference>
<dbReference type="PROSITE" id="PS00048">
    <property type="entry name" value="PROTAMINE_P1"/>
    <property type="match status" value="1"/>
</dbReference>
<accession>Q71VG4</accession>